<reference key="1">
    <citation type="journal article" date="2007" name="Microbiology">
        <title>Comparative analysis of the Corynebacterium glutamicum group and complete genome sequence of strain R.</title>
        <authorList>
            <person name="Yukawa H."/>
            <person name="Omumasaba C.A."/>
            <person name="Nonaka H."/>
            <person name="Kos P."/>
            <person name="Okai N."/>
            <person name="Suzuki N."/>
            <person name="Suda M."/>
            <person name="Tsuge Y."/>
            <person name="Watanabe J."/>
            <person name="Ikeda Y."/>
            <person name="Vertes A.A."/>
            <person name="Inui M."/>
        </authorList>
    </citation>
    <scope>NUCLEOTIDE SEQUENCE [LARGE SCALE GENOMIC DNA]</scope>
    <source>
        <strain>R</strain>
    </source>
</reference>
<gene>
    <name evidence="1" type="primary">infC</name>
    <name type="ordered locus">cgR_1442</name>
</gene>
<accession>A4QDY1</accession>
<organism>
    <name type="scientific">Corynebacterium glutamicum (strain R)</name>
    <dbReference type="NCBI Taxonomy" id="340322"/>
    <lineage>
        <taxon>Bacteria</taxon>
        <taxon>Bacillati</taxon>
        <taxon>Actinomycetota</taxon>
        <taxon>Actinomycetes</taxon>
        <taxon>Mycobacteriales</taxon>
        <taxon>Corynebacteriaceae</taxon>
        <taxon>Corynebacterium</taxon>
    </lineage>
</organism>
<comment type="function">
    <text evidence="1">IF-3 binds to the 30S ribosomal subunit and shifts the equilibrium between 70S ribosomes and their 50S and 30S subunits in favor of the free subunits, thus enhancing the availability of 30S subunits on which protein synthesis initiation begins.</text>
</comment>
<comment type="subunit">
    <text evidence="1">Monomer.</text>
</comment>
<comment type="subcellular location">
    <subcellularLocation>
        <location evidence="1">Cytoplasm</location>
    </subcellularLocation>
</comment>
<comment type="similarity">
    <text evidence="1">Belongs to the IF-3 family.</text>
</comment>
<evidence type="ECO:0000255" key="1">
    <source>
        <dbReference type="HAMAP-Rule" id="MF_00080"/>
    </source>
</evidence>
<name>IF3_CORGB</name>
<protein>
    <recommendedName>
        <fullName evidence="1">Translation initiation factor IF-3</fullName>
    </recommendedName>
</protein>
<feature type="chain" id="PRO_1000004538" description="Translation initiation factor IF-3">
    <location>
        <begin position="1"/>
        <end position="189"/>
    </location>
</feature>
<sequence length="189" mass="21690">MVRYVKFSRTANRGVHISAEARINERIRVPEVRLVGPNGEQVGIVRIEDARKLAFDADLDLVEVAPNAKPPVCKIMDYGKFKYEAAQKARESRKNQQQTVVKEQKLRPKIDDHDYETKKNNVIRFLEKGSKVKVTIMFRGREQARPELGYRLLERLANDVADFGIVETRAKQDGRNMTMVLGPVRKGKK</sequence>
<dbReference type="EMBL" id="AP009044">
    <property type="protein sequence ID" value="BAF54433.1"/>
    <property type="molecule type" value="Genomic_DNA"/>
</dbReference>
<dbReference type="RefSeq" id="WP_003858724.1">
    <property type="nucleotide sequence ID" value="NC_009342.1"/>
</dbReference>
<dbReference type="SMR" id="A4QDY1"/>
<dbReference type="KEGG" id="cgt:cgR_1442"/>
<dbReference type="HOGENOM" id="CLU_054919_3_2_11"/>
<dbReference type="PhylomeDB" id="A4QDY1"/>
<dbReference type="Proteomes" id="UP000006698">
    <property type="component" value="Chromosome"/>
</dbReference>
<dbReference type="GO" id="GO:0005829">
    <property type="term" value="C:cytosol"/>
    <property type="evidence" value="ECO:0007669"/>
    <property type="project" value="TreeGrafter"/>
</dbReference>
<dbReference type="GO" id="GO:0016020">
    <property type="term" value="C:membrane"/>
    <property type="evidence" value="ECO:0007669"/>
    <property type="project" value="TreeGrafter"/>
</dbReference>
<dbReference type="GO" id="GO:0043022">
    <property type="term" value="F:ribosome binding"/>
    <property type="evidence" value="ECO:0007669"/>
    <property type="project" value="TreeGrafter"/>
</dbReference>
<dbReference type="GO" id="GO:0003743">
    <property type="term" value="F:translation initiation factor activity"/>
    <property type="evidence" value="ECO:0007669"/>
    <property type="project" value="UniProtKB-UniRule"/>
</dbReference>
<dbReference type="GO" id="GO:0032790">
    <property type="term" value="P:ribosome disassembly"/>
    <property type="evidence" value="ECO:0007669"/>
    <property type="project" value="TreeGrafter"/>
</dbReference>
<dbReference type="FunFam" id="3.10.20.80:FF:000001">
    <property type="entry name" value="Translation initiation factor IF-3"/>
    <property type="match status" value="1"/>
</dbReference>
<dbReference type="FunFam" id="3.30.110.10:FF:000002">
    <property type="entry name" value="Translation initiation factor IF-3"/>
    <property type="match status" value="1"/>
</dbReference>
<dbReference type="Gene3D" id="3.30.110.10">
    <property type="entry name" value="Translation initiation factor 3 (IF-3), C-terminal domain"/>
    <property type="match status" value="1"/>
</dbReference>
<dbReference type="Gene3D" id="3.10.20.80">
    <property type="entry name" value="Translation initiation factor 3 (IF-3), N-terminal domain"/>
    <property type="match status" value="1"/>
</dbReference>
<dbReference type="HAMAP" id="MF_00080">
    <property type="entry name" value="IF_3"/>
    <property type="match status" value="1"/>
</dbReference>
<dbReference type="InterPro" id="IPR036788">
    <property type="entry name" value="T_IF-3_C_sf"/>
</dbReference>
<dbReference type="InterPro" id="IPR036787">
    <property type="entry name" value="T_IF-3_N_sf"/>
</dbReference>
<dbReference type="InterPro" id="IPR019813">
    <property type="entry name" value="Translation_initiation_fac3_CS"/>
</dbReference>
<dbReference type="InterPro" id="IPR001288">
    <property type="entry name" value="Translation_initiation_fac_3"/>
</dbReference>
<dbReference type="InterPro" id="IPR019815">
    <property type="entry name" value="Translation_initiation_fac_3_C"/>
</dbReference>
<dbReference type="InterPro" id="IPR019814">
    <property type="entry name" value="Translation_initiation_fac_3_N"/>
</dbReference>
<dbReference type="NCBIfam" id="TIGR00168">
    <property type="entry name" value="infC"/>
    <property type="match status" value="1"/>
</dbReference>
<dbReference type="PANTHER" id="PTHR10938">
    <property type="entry name" value="TRANSLATION INITIATION FACTOR IF-3"/>
    <property type="match status" value="1"/>
</dbReference>
<dbReference type="PANTHER" id="PTHR10938:SF0">
    <property type="entry name" value="TRANSLATION INITIATION FACTOR IF-3, MITOCHONDRIAL"/>
    <property type="match status" value="1"/>
</dbReference>
<dbReference type="Pfam" id="PF00707">
    <property type="entry name" value="IF3_C"/>
    <property type="match status" value="1"/>
</dbReference>
<dbReference type="Pfam" id="PF05198">
    <property type="entry name" value="IF3_N"/>
    <property type="match status" value="1"/>
</dbReference>
<dbReference type="SUPFAM" id="SSF55200">
    <property type="entry name" value="Translation initiation factor IF3, C-terminal domain"/>
    <property type="match status" value="1"/>
</dbReference>
<dbReference type="SUPFAM" id="SSF54364">
    <property type="entry name" value="Translation initiation factor IF3, N-terminal domain"/>
    <property type="match status" value="1"/>
</dbReference>
<dbReference type="PROSITE" id="PS00938">
    <property type="entry name" value="IF3"/>
    <property type="match status" value="1"/>
</dbReference>
<proteinExistence type="inferred from homology"/>
<keyword id="KW-0963">Cytoplasm</keyword>
<keyword id="KW-0396">Initiation factor</keyword>
<keyword id="KW-0648">Protein biosynthesis</keyword>